<proteinExistence type="evidence at protein level"/>
<organism>
    <name type="scientific">Emericella nidulans</name>
    <name type="common">Aspergillus nidulans</name>
    <dbReference type="NCBI Taxonomy" id="162425"/>
    <lineage>
        <taxon>Eukaryota</taxon>
        <taxon>Fungi</taxon>
        <taxon>Dikarya</taxon>
        <taxon>Ascomycota</taxon>
        <taxon>Pezizomycotina</taxon>
        <taxon>Eurotiomycetes</taxon>
        <taxon>Eurotiomycetidae</taxon>
        <taxon>Eurotiales</taxon>
        <taxon>Aspergillaceae</taxon>
        <taxon>Aspergillus</taxon>
        <taxon>Aspergillus subgen. Nidulantes</taxon>
    </lineage>
</organism>
<reference key="1">
    <citation type="journal article" date="2004" name="J. Biol. Chem.">
        <title>The lipid body protein, PpoA, coordinates sexual and asexual sporulation in Aspergillus nidulans.</title>
        <authorList>
            <person name="Tsitsigiannis D.I."/>
            <person name="Zarnowski R."/>
            <person name="Keller N.P."/>
        </authorList>
    </citation>
    <scope>NUCLEOTIDE SEQUENCE [GENOMIC DNA]</scope>
    <scope>FUNCTION</scope>
</reference>
<reference key="2">
    <citation type="journal article" date="2009" name="J. Biol. Chem.">
        <title>Identification of PpoA from Aspergillus nidulans as a fusion protein of a fatty acid heme dioxygenase/peroxidase and a cytochrome P450.</title>
        <authorList>
            <person name="Brodhun F."/>
            <person name="Gobel C."/>
            <person name="Hornung E."/>
            <person name="Feussner I."/>
        </authorList>
    </citation>
    <scope>SUBUNIT</scope>
    <scope>CATALYTIC ACTIVITY</scope>
    <scope>COFACTOR</scope>
    <scope>ACTIVITY REGULATION</scope>
    <scope>BIOPHYSICOCHEMICAL PROPERTIES</scope>
    <scope>MUTAGENESIS OF TYR-374 AND HIS-1004</scope>
</reference>
<sequence>MGEDKETNILAGLGNTISQVENVVAASLRPLPTATGDGTYVAESTQTGLAKDLSHVDLKDVRTLAEVVKSAATGEPVDDKQYIMERVIQLAAGLPSTSRNAAELTKSFLNMLWNDLEHPPVSYLGADSMHRKADGSGNNRFWPQLGAAGSAYARSVRPKTMQSPSLPDPETIFDCLLRRKEYREHPNKISSVLFYLASIIIHDLFQTDPKDNSVSKTSSYLDLSPLYGNNQDEQNLVRTFKDGKLKPDCFATKRVLGFPPGVGVLLIMFNRFHNYVVDQLAAINECGRFTKPDESNVDEYAKYDNNLFQTGRLVTCGLYANIILKDYVRTILNINRTDSTWSLDPRMEMKDGLLGEAAAMATGNQVSAEFNVVYRWHACISKRDEKWTEDFHREIMPGVDPSTLSMQDFVAGLGRWQAGLPQEPLERPFSGLQRKPDGAFNDDDLVNLFEKSVEDCAGAFGASHVPAIFKSVEALGIMQARRWNLGTLNEFRQYFNLAPHKTFEDINSDPYIADQLKRLYDHPDLVEIYPGVVVEEAKDSMVPGSGLCTNFTISRAILSDAVALVRGDRFYTVDYTPKHLTNWAYNEIQPNNAVDQGQVFYKLVLRAFPNHFDGNSIYAHFPLVVPSENEKILKSLGVAEKYSWEKPSRISHPIFISSHAACMSILENQETFKVTWGRKIEFLMQRDKHQYGKDFMLSGDRPPNAASRKMMGSALYRDEWEAEVKNFYEQTTLKLLHKNSYKLAGVNQVDIVRDVANLAQVHFCSSVFSLPLKTDSNPRGIFAESELYKIMAAVFTAIFYDADIGKSFELNQAARTVTQQLGQLTMANVEIIAKTGLIANLVNRLHRRDVLSEYGIHMIQRLLDSGLPATEIVWTHILPTAGGMVANQAQLFSQCLDYYLSEEGSGHLPEINRLAKENTPEADELLTRYFMEGARLRSSVALPRVAAQPTVVEDNGEKLTIKAGQVVMCNLVSACMDPTAFPDPEKVKLDRDMNLYAHFGFGPHKCLGLDLCKTGLSTMLKVLGRLDNLRRAPGAQGQLKKLSGPGGIAKYMNEDQSGFTPFPSTMKIQWDGELPQLKEDF</sequence>
<gene>
    <name type="primary">ppoA</name>
</gene>
<evidence type="ECO:0000255" key="1"/>
<evidence type="ECO:0000255" key="2">
    <source>
        <dbReference type="PROSITE-ProRule" id="PRU00298"/>
    </source>
</evidence>
<evidence type="ECO:0000269" key="3">
    <source>
    </source>
</evidence>
<evidence type="ECO:0000269" key="4">
    <source>
    </source>
</evidence>
<name>PPOA_EMEND</name>
<accession>Q6RET3</accession>
<accession>Q5BBW3</accession>
<keyword id="KW-0223">Dioxygenase</keyword>
<keyword id="KW-0349">Heme</keyword>
<keyword id="KW-0408">Iron</keyword>
<keyword id="KW-0413">Isomerase</keyword>
<keyword id="KW-0479">Metal-binding</keyword>
<keyword id="KW-0511">Multifunctional enzyme</keyword>
<keyword id="KW-0560">Oxidoreductase</keyword>
<keyword id="KW-0575">Peroxidase</keyword>
<protein>
    <recommendedName>
        <fullName>Psi-producing oxygenase A</fullName>
    </recommendedName>
    <alternativeName>
        <fullName>Fatty acid oxygenase ppoA</fullName>
    </alternativeName>
    <domain>
        <recommendedName>
            <fullName>Linoleate 8R-lipoxygenase</fullName>
            <ecNumber>1.13.11.60</ecNumber>
        </recommendedName>
    </domain>
    <domain>
        <recommendedName>
            <fullName>9,12-octadecadienoate 8-hydroperoxide 8R-isomerase</fullName>
            <ecNumber>5.4.4.5</ecNumber>
        </recommendedName>
    </domain>
</protein>
<dbReference type="EC" id="1.13.11.60"/>
<dbReference type="EC" id="5.4.4.5"/>
<dbReference type="EMBL" id="AY502073">
    <property type="protein sequence ID" value="AAR88626.1"/>
    <property type="molecule type" value="Genomic_DNA"/>
</dbReference>
<dbReference type="SASBDB" id="Q6RET3"/>
<dbReference type="SMR" id="Q6RET3"/>
<dbReference type="PeroxiBase" id="5297">
    <property type="entry name" value="AniLDS01"/>
</dbReference>
<dbReference type="OMA" id="KIQWDGD"/>
<dbReference type="BRENDA" id="1.13.11.60">
    <property type="organism ID" value="517"/>
</dbReference>
<dbReference type="BRENDA" id="5.4.4.5">
    <property type="organism ID" value="517"/>
</dbReference>
<dbReference type="GO" id="GO:0020037">
    <property type="term" value="F:heme binding"/>
    <property type="evidence" value="ECO:0007669"/>
    <property type="project" value="InterPro"/>
</dbReference>
<dbReference type="GO" id="GO:0005506">
    <property type="term" value="F:iron ion binding"/>
    <property type="evidence" value="ECO:0007669"/>
    <property type="project" value="InterPro"/>
</dbReference>
<dbReference type="GO" id="GO:0016853">
    <property type="term" value="F:isomerase activity"/>
    <property type="evidence" value="ECO:0007669"/>
    <property type="project" value="UniProtKB-KW"/>
</dbReference>
<dbReference type="GO" id="GO:0052878">
    <property type="term" value="F:linoleate 8R-lipoxygenase activity"/>
    <property type="evidence" value="ECO:0007669"/>
    <property type="project" value="UniProtKB-EC"/>
</dbReference>
<dbReference type="GO" id="GO:0004497">
    <property type="term" value="F:monooxygenase activity"/>
    <property type="evidence" value="ECO:0007669"/>
    <property type="project" value="InterPro"/>
</dbReference>
<dbReference type="GO" id="GO:0016705">
    <property type="term" value="F:oxidoreductase activity, acting on paired donors, with incorporation or reduction of molecular oxygen"/>
    <property type="evidence" value="ECO:0007669"/>
    <property type="project" value="InterPro"/>
</dbReference>
<dbReference type="GO" id="GO:0004601">
    <property type="term" value="F:peroxidase activity"/>
    <property type="evidence" value="ECO:0007669"/>
    <property type="project" value="UniProtKB-KW"/>
</dbReference>
<dbReference type="GO" id="GO:0006631">
    <property type="term" value="P:fatty acid metabolic process"/>
    <property type="evidence" value="ECO:0007669"/>
    <property type="project" value="UniProtKB-ARBA"/>
</dbReference>
<dbReference type="GO" id="GO:0006979">
    <property type="term" value="P:response to oxidative stress"/>
    <property type="evidence" value="ECO:0007669"/>
    <property type="project" value="InterPro"/>
</dbReference>
<dbReference type="CDD" id="cd20612">
    <property type="entry name" value="CYP_LDS-like_C"/>
    <property type="match status" value="1"/>
</dbReference>
<dbReference type="CDD" id="cd09817">
    <property type="entry name" value="linoleate_diol_synthase_like"/>
    <property type="match status" value="1"/>
</dbReference>
<dbReference type="FunFam" id="1.10.630.10:FF:000058">
    <property type="entry name" value="Fatty acid oxygenase"/>
    <property type="match status" value="1"/>
</dbReference>
<dbReference type="FunFam" id="1.10.640.10:FF:000005">
    <property type="entry name" value="Fatty acid oxygenase"/>
    <property type="match status" value="1"/>
</dbReference>
<dbReference type="Gene3D" id="1.10.630.10">
    <property type="entry name" value="Cytochrome P450"/>
    <property type="match status" value="1"/>
</dbReference>
<dbReference type="Gene3D" id="1.10.640.10">
    <property type="entry name" value="Haem peroxidase domain superfamily, animal type"/>
    <property type="match status" value="1"/>
</dbReference>
<dbReference type="InterPro" id="IPR001128">
    <property type="entry name" value="Cyt_P450"/>
</dbReference>
<dbReference type="InterPro" id="IPR017972">
    <property type="entry name" value="Cyt_P450_CS"/>
</dbReference>
<dbReference type="InterPro" id="IPR036396">
    <property type="entry name" value="Cyt_P450_sf"/>
</dbReference>
<dbReference type="InterPro" id="IPR019791">
    <property type="entry name" value="Haem_peroxidase_animal"/>
</dbReference>
<dbReference type="InterPro" id="IPR010255">
    <property type="entry name" value="Haem_peroxidase_sf"/>
</dbReference>
<dbReference type="InterPro" id="IPR037120">
    <property type="entry name" value="Haem_peroxidase_sf_animal"/>
</dbReference>
<dbReference type="InterPro" id="IPR050783">
    <property type="entry name" value="Oxylipin_biosynth_metab"/>
</dbReference>
<dbReference type="InterPro" id="IPR034812">
    <property type="entry name" value="Ppo-like_N"/>
</dbReference>
<dbReference type="PANTHER" id="PTHR11903">
    <property type="entry name" value="PROSTAGLANDIN G/H SYNTHASE"/>
    <property type="match status" value="1"/>
</dbReference>
<dbReference type="PANTHER" id="PTHR11903:SF37">
    <property type="entry name" value="PSI-PRODUCING OXYGENASE A"/>
    <property type="match status" value="1"/>
</dbReference>
<dbReference type="Pfam" id="PF03098">
    <property type="entry name" value="An_peroxidase"/>
    <property type="match status" value="2"/>
</dbReference>
<dbReference type="Pfam" id="PF00067">
    <property type="entry name" value="p450"/>
    <property type="match status" value="1"/>
</dbReference>
<dbReference type="SUPFAM" id="SSF48264">
    <property type="entry name" value="Cytochrome P450"/>
    <property type="match status" value="1"/>
</dbReference>
<dbReference type="SUPFAM" id="SSF48113">
    <property type="entry name" value="Heme-dependent peroxidases"/>
    <property type="match status" value="1"/>
</dbReference>
<dbReference type="PROSITE" id="PS00086">
    <property type="entry name" value="CYTOCHROME_P450"/>
    <property type="match status" value="1"/>
</dbReference>
<dbReference type="PROSITE" id="PS50292">
    <property type="entry name" value="PEROXIDASE_3"/>
    <property type="match status" value="1"/>
</dbReference>
<comment type="function">
    <text evidence="3">Bifunctional heme-containing enzyme that oxidizes linoleic acid to (8R,9Z,12Z)-8-hydroperoxyoctadeca-9,12-dienoate (within the N-terminal heme peroxidase domain), which is subsequently isomerized to (5S,8R,9Z,12Z)-5,8-dihydroxyoctadeca-9,12-dienoate (within the C-terminal P450 heme thiolate domain). Oxidized unsaturated fatty acids, so-called oxylipins, derived from endogenous fatty acids, influence the development of the asexual conidiophores and sexual cleistothecia and regulate the secondary metabolism. These substances were collectively named psi factors and are primarily a mixture of hydroxylated oleic, linoleic and alpha-linolenic acids. They are termed psi-beta, psi-alpha, and psi-gamma, respectively.</text>
</comment>
<comment type="catalytic activity">
    <reaction evidence="4">
        <text>(9Z,12Z)-octadecadienoate + O2 = (8R,9Z,12Z)-8-hydroperoxyoctadeca-9,12-dienoate</text>
        <dbReference type="Rhea" id="RHEA:25395"/>
        <dbReference type="ChEBI" id="CHEBI:15379"/>
        <dbReference type="ChEBI" id="CHEBI:30245"/>
        <dbReference type="ChEBI" id="CHEBI:58659"/>
        <dbReference type="EC" id="1.13.11.60"/>
    </reaction>
</comment>
<comment type="catalytic activity">
    <reaction evidence="4">
        <text>(8R,9Z,12Z)-8-hydroperoxyoctadeca-9,12-dienoate = (5S,8R,9Z,12Z)-5,8-dihydroxyoctadeca-9,12-dienoate</text>
        <dbReference type="Rhea" id="RHEA:31579"/>
        <dbReference type="ChEBI" id="CHEBI:58659"/>
        <dbReference type="ChEBI" id="CHEBI:63217"/>
        <dbReference type="EC" id="5.4.4.5"/>
    </reaction>
</comment>
<comment type="cofactor">
    <cofactor evidence="4">
        <name>heme b</name>
        <dbReference type="ChEBI" id="CHEBI:60344"/>
    </cofactor>
</comment>
<comment type="biophysicochemical properties">
    <kinetics>
        <KM evidence="4">5 uM for palmitoleic acid</KM>
        <KM evidence="4">6.71 uM for oleic acid</KM>
        <KM evidence="4">18.3 uM for linoleic acid</KM>
        <KM evidence="4">22.6 uM for alpha-linolenic acid</KM>
        <Vmax evidence="4">1.76 umol/min/mg enzyme toward palmitoleic acid</Vmax>
        <Vmax evidence="4">2.48 umol/min/mg enzyme toward oleic acid</Vmax>
        <Vmax evidence="4">3.16 umol/min/mg enzyme toward linoleic acid</Vmax>
        <Vmax evidence="4">2.97 umol/min/mg enzyme toward alpha-linolenic acid</Vmax>
    </kinetics>
    <phDependence>
        <text evidence="4">Optimum pH is 7-7.5.</text>
    </phDependence>
</comment>
<comment type="subunit">
    <text evidence="4">Homotetramer.</text>
</comment>
<comment type="similarity">
    <text evidence="2">Belongs to the peroxidase family.</text>
</comment>
<feature type="chain" id="PRO_0000416225" description="Psi-producing oxygenase A">
    <location>
        <begin position="1"/>
        <end position="1081"/>
    </location>
</feature>
<feature type="region of interest" description="Linoleate 8R-lipoxygenase">
    <location>
        <begin position="105"/>
        <end position="446"/>
    </location>
</feature>
<feature type="region of interest" description="9,12-octadecadienoate 8-hydroperoxide 8R-isomerase">
    <location>
        <begin position="654"/>
        <end position="1081"/>
    </location>
</feature>
<feature type="active site" evidence="1">
    <location>
        <position position="374"/>
    </location>
</feature>
<feature type="binding site" description="axial binding residue" evidence="2">
    <location>
        <position position="202"/>
    </location>
    <ligand>
        <name>heme b</name>
        <dbReference type="ChEBI" id="CHEBI:60344"/>
    </ligand>
    <ligandPart>
        <name>Fe</name>
        <dbReference type="ChEBI" id="CHEBI:18248"/>
    </ligandPart>
</feature>
<feature type="binding site" description="axial binding residue" evidence="2">
    <location>
        <position position="377"/>
    </location>
    <ligand>
        <name>heme b</name>
        <dbReference type="ChEBI" id="CHEBI:60344"/>
    </ligand>
    <ligandPart>
        <name>Fe</name>
        <dbReference type="ChEBI" id="CHEBI:18248"/>
    </ligandPart>
</feature>
<feature type="mutagenesis site" description="Impairs the linoleate 8R-lipoxygenase activity." evidence="4">
    <original>Y</original>
    <variation>F</variation>
    <location>
        <position position="374"/>
    </location>
</feature>
<feature type="mutagenesis site" description="Impairs the isomerase activity." evidence="4">
    <original>H</original>
    <variation>A</variation>
    <location>
        <position position="1004"/>
    </location>
</feature>